<gene>
    <name evidence="1" type="primary">psb30</name>
    <name evidence="1" type="synonym">ycf12</name>
</gene>
<evidence type="ECO:0000255" key="1">
    <source>
        <dbReference type="HAMAP-Rule" id="MF_01329"/>
    </source>
</evidence>
<organism>
    <name type="scientific">Skeletonema costatum</name>
    <name type="common">Marine centric diatom</name>
    <name type="synonym">Melosira costata</name>
    <dbReference type="NCBI Taxonomy" id="2843"/>
    <lineage>
        <taxon>Eukaryota</taxon>
        <taxon>Sar</taxon>
        <taxon>Stramenopiles</taxon>
        <taxon>Ochrophyta</taxon>
        <taxon>Bacillariophyta</taxon>
        <taxon>Coscinodiscophyceae</taxon>
        <taxon>Thalassiosirophycidae</taxon>
        <taxon>Thalassiosirales</taxon>
        <taxon>Skeletonemataceae</taxon>
        <taxon>Skeletonema</taxon>
    </lineage>
</organism>
<accession>O96797</accession>
<name>PSB30_SKECO</name>
<protein>
    <recommendedName>
        <fullName evidence="1">Photosystem II reaction center protein Psb30</fullName>
    </recommendedName>
    <alternativeName>
        <fullName evidence="1">Photosystem II reaction center protein Ycf12</fullName>
    </alternativeName>
</protein>
<proteinExistence type="inferred from homology"/>
<comment type="function">
    <text evidence="1">A core subunit of photosystem II (PSII), probably helps stabilize the reaction center.</text>
</comment>
<comment type="subunit">
    <text evidence="1">PSII is composed of 1 copy each of membrane proteins PsbA, PsbB, PsbC, PsbD, PsbE, PsbF, PsbH, PsbI, PsbJ, PsbK, PsbL, PsbM, PsbT, PsbX, PsbY, PsbZ, Psb30/Ycf12, peripheral proteins of the oxygen-evolving complex and a large number of cofactors. It forms dimeric complexes.</text>
</comment>
<comment type="subcellular location">
    <subcellularLocation>
        <location evidence="1">Plastid</location>
        <location evidence="1">Chloroplast thylakoid membrane</location>
        <topology evidence="1">Single-pass membrane protein</topology>
    </subcellularLocation>
</comment>
<comment type="similarity">
    <text evidence="1">Belongs to the Psb30/Ycf12 family.</text>
</comment>
<sequence>MVNWQVIGQLVSTGLIGLLGPAVIILLALKKGNL</sequence>
<keyword id="KW-0150">Chloroplast</keyword>
<keyword id="KW-0472">Membrane</keyword>
<keyword id="KW-0602">Photosynthesis</keyword>
<keyword id="KW-0604">Photosystem II</keyword>
<keyword id="KW-0934">Plastid</keyword>
<keyword id="KW-0793">Thylakoid</keyword>
<keyword id="KW-0812">Transmembrane</keyword>
<keyword id="KW-1133">Transmembrane helix</keyword>
<feature type="chain" id="PRO_0000059040" description="Photosystem II reaction center protein Psb30">
    <location>
        <begin position="1"/>
        <end position="34"/>
    </location>
</feature>
<feature type="transmembrane region" description="Helical" evidence="1">
    <location>
        <begin position="6"/>
        <end position="26"/>
    </location>
</feature>
<dbReference type="EMBL" id="AJ132263">
    <property type="protein sequence ID" value="CAA10618.1"/>
    <property type="molecule type" value="Genomic_DNA"/>
</dbReference>
<dbReference type="SMR" id="O96797"/>
<dbReference type="GO" id="GO:0009535">
    <property type="term" value="C:chloroplast thylakoid membrane"/>
    <property type="evidence" value="ECO:0007669"/>
    <property type="project" value="UniProtKB-SubCell"/>
</dbReference>
<dbReference type="GO" id="GO:0009523">
    <property type="term" value="C:photosystem II"/>
    <property type="evidence" value="ECO:0007669"/>
    <property type="project" value="UniProtKB-KW"/>
</dbReference>
<dbReference type="GO" id="GO:0015979">
    <property type="term" value="P:photosynthesis"/>
    <property type="evidence" value="ECO:0007669"/>
    <property type="project" value="UniProtKB-KW"/>
</dbReference>
<dbReference type="HAMAP" id="MF_01329">
    <property type="entry name" value="PSII_Psb30_Ycf12"/>
    <property type="match status" value="1"/>
</dbReference>
<dbReference type="InterPro" id="IPR010284">
    <property type="entry name" value="PSII_Ycf12_core-subunit"/>
</dbReference>
<dbReference type="NCBIfam" id="NF010239">
    <property type="entry name" value="PRK13686.1"/>
    <property type="match status" value="1"/>
</dbReference>
<dbReference type="Pfam" id="PF05969">
    <property type="entry name" value="PSII_Ycf12"/>
    <property type="match status" value="1"/>
</dbReference>
<geneLocation type="chloroplast"/>
<reference key="1">
    <citation type="journal article" date="1999" name="DNA Seq.">
        <title>Comparison of gene arrangements of chloroplasts between two centric diatoms, Skeletonema costatum and Odontella sinensis.</title>
        <authorList>
            <person name="Tada N."/>
            <person name="Shibata S."/>
            <person name="Otsuka S."/>
            <person name="Namba K."/>
            <person name="Oyaizu H."/>
        </authorList>
    </citation>
    <scope>NUCLEOTIDE SEQUENCE [GENOMIC DNA]</scope>
    <source>
        <strain>NIES-323 / Sk-85w</strain>
    </source>
</reference>